<sequence>MLSDNNFVSETLENVQYLLPGAKVIKLRGYSRAHKVYTIAKSPVEKWKVAAGLSGSEIAILIRKGHWIGASIPAGGIVIDIDDSKQGELVKGLLDAQNFHCHCIRTLMGGSLFLRITNMGKRKLNK</sequence>
<gene>
    <name type="primary">ydiM</name>
    <name type="ordered locus">BSU06040</name>
</gene>
<feature type="chain" id="PRO_0000049507" description="Uncharacterized protein YdiM">
    <location>
        <begin position="1"/>
        <end position="126"/>
    </location>
</feature>
<name>YDIM_BACSU</name>
<proteinExistence type="evidence at transcript level"/>
<reference key="1">
    <citation type="journal article" date="1997" name="DNA Res.">
        <title>Sequence analysis of the groESL-cotA region of the Bacillus subtilis genome, containing the restriction/modification system genes.</title>
        <authorList>
            <person name="Kasahara Y."/>
            <person name="Nakai S."/>
            <person name="Ogasawara N."/>
            <person name="Yata K."/>
            <person name="Sadaie Y."/>
        </authorList>
    </citation>
    <scope>NUCLEOTIDE SEQUENCE [GENOMIC DNA]</scope>
    <source>
        <strain>168 / Marburg / ATCC 6051 / DSM 10 / JCM 1465 / NBRC 13719 / NCIMB 3610 / NRRL NRS-744 / VKM B-501</strain>
    </source>
</reference>
<reference key="2">
    <citation type="journal article" date="1997" name="Nature">
        <title>The complete genome sequence of the Gram-positive bacterium Bacillus subtilis.</title>
        <authorList>
            <person name="Kunst F."/>
            <person name="Ogasawara N."/>
            <person name="Moszer I."/>
            <person name="Albertini A.M."/>
            <person name="Alloni G."/>
            <person name="Azevedo V."/>
            <person name="Bertero M.G."/>
            <person name="Bessieres P."/>
            <person name="Bolotin A."/>
            <person name="Borchert S."/>
            <person name="Borriss R."/>
            <person name="Boursier L."/>
            <person name="Brans A."/>
            <person name="Braun M."/>
            <person name="Brignell S.C."/>
            <person name="Bron S."/>
            <person name="Brouillet S."/>
            <person name="Bruschi C.V."/>
            <person name="Caldwell B."/>
            <person name="Capuano V."/>
            <person name="Carter N.M."/>
            <person name="Choi S.-K."/>
            <person name="Codani J.-J."/>
            <person name="Connerton I.F."/>
            <person name="Cummings N.J."/>
            <person name="Daniel R.A."/>
            <person name="Denizot F."/>
            <person name="Devine K.M."/>
            <person name="Duesterhoeft A."/>
            <person name="Ehrlich S.D."/>
            <person name="Emmerson P.T."/>
            <person name="Entian K.-D."/>
            <person name="Errington J."/>
            <person name="Fabret C."/>
            <person name="Ferrari E."/>
            <person name="Foulger D."/>
            <person name="Fritz C."/>
            <person name="Fujita M."/>
            <person name="Fujita Y."/>
            <person name="Fuma S."/>
            <person name="Galizzi A."/>
            <person name="Galleron N."/>
            <person name="Ghim S.-Y."/>
            <person name="Glaser P."/>
            <person name="Goffeau A."/>
            <person name="Golightly E.J."/>
            <person name="Grandi G."/>
            <person name="Guiseppi G."/>
            <person name="Guy B.J."/>
            <person name="Haga K."/>
            <person name="Haiech J."/>
            <person name="Harwood C.R."/>
            <person name="Henaut A."/>
            <person name="Hilbert H."/>
            <person name="Holsappel S."/>
            <person name="Hosono S."/>
            <person name="Hullo M.-F."/>
            <person name="Itaya M."/>
            <person name="Jones L.-M."/>
            <person name="Joris B."/>
            <person name="Karamata D."/>
            <person name="Kasahara Y."/>
            <person name="Klaerr-Blanchard M."/>
            <person name="Klein C."/>
            <person name="Kobayashi Y."/>
            <person name="Koetter P."/>
            <person name="Koningstein G."/>
            <person name="Krogh S."/>
            <person name="Kumano M."/>
            <person name="Kurita K."/>
            <person name="Lapidus A."/>
            <person name="Lardinois S."/>
            <person name="Lauber J."/>
            <person name="Lazarevic V."/>
            <person name="Lee S.-M."/>
            <person name="Levine A."/>
            <person name="Liu H."/>
            <person name="Masuda S."/>
            <person name="Mauel C."/>
            <person name="Medigue C."/>
            <person name="Medina N."/>
            <person name="Mellado R.P."/>
            <person name="Mizuno M."/>
            <person name="Moestl D."/>
            <person name="Nakai S."/>
            <person name="Noback M."/>
            <person name="Noone D."/>
            <person name="O'Reilly M."/>
            <person name="Ogawa K."/>
            <person name="Ogiwara A."/>
            <person name="Oudega B."/>
            <person name="Park S.-H."/>
            <person name="Parro V."/>
            <person name="Pohl T.M."/>
            <person name="Portetelle D."/>
            <person name="Porwollik S."/>
            <person name="Prescott A.M."/>
            <person name="Presecan E."/>
            <person name="Pujic P."/>
            <person name="Purnelle B."/>
            <person name="Rapoport G."/>
            <person name="Rey M."/>
            <person name="Reynolds S."/>
            <person name="Rieger M."/>
            <person name="Rivolta C."/>
            <person name="Rocha E."/>
            <person name="Roche B."/>
            <person name="Rose M."/>
            <person name="Sadaie Y."/>
            <person name="Sato T."/>
            <person name="Scanlan E."/>
            <person name="Schleich S."/>
            <person name="Schroeter R."/>
            <person name="Scoffone F."/>
            <person name="Sekiguchi J."/>
            <person name="Sekowska A."/>
            <person name="Seror S.J."/>
            <person name="Serror P."/>
            <person name="Shin B.-S."/>
            <person name="Soldo B."/>
            <person name="Sorokin A."/>
            <person name="Tacconi E."/>
            <person name="Takagi T."/>
            <person name="Takahashi H."/>
            <person name="Takemaru K."/>
            <person name="Takeuchi M."/>
            <person name="Tamakoshi A."/>
            <person name="Tanaka T."/>
            <person name="Terpstra P."/>
            <person name="Tognoni A."/>
            <person name="Tosato V."/>
            <person name="Uchiyama S."/>
            <person name="Vandenbol M."/>
            <person name="Vannier F."/>
            <person name="Vassarotti A."/>
            <person name="Viari A."/>
            <person name="Wambutt R."/>
            <person name="Wedler E."/>
            <person name="Wedler H."/>
            <person name="Weitzenegger T."/>
            <person name="Winters P."/>
            <person name="Wipat A."/>
            <person name="Yamamoto H."/>
            <person name="Yamane K."/>
            <person name="Yasumoto K."/>
            <person name="Yata K."/>
            <person name="Yoshida K."/>
            <person name="Yoshikawa H.-F."/>
            <person name="Zumstein E."/>
            <person name="Yoshikawa H."/>
            <person name="Danchin A."/>
        </authorList>
    </citation>
    <scope>NUCLEOTIDE SEQUENCE [LARGE SCALE GENOMIC DNA]</scope>
    <source>
        <strain>168</strain>
    </source>
</reference>
<reference key="3">
    <citation type="journal article" date="2002" name="J. Bacteriol.">
        <title>Molecular organization of intrinsic restriction and modification genes BsuM of Bacillus subtilis Marburg.</title>
        <authorList>
            <person name="Ohshima H."/>
            <person name="Matsuoka S."/>
            <person name="Asai K."/>
            <person name="Sadaie Y."/>
        </authorList>
    </citation>
    <scope>INDUCTION</scope>
    <scope>OPERON STRUCTURE</scope>
    <scope>DISRUPTION PHENOTYPE</scope>
    <source>
        <strain>168 / Marburg / ATCC 6051 / DSM 10 / JCM 1465 / NBRC 13719 / NCIMB 3610 / NRRL NRS-744 / VKM B-501</strain>
    </source>
</reference>
<protein>
    <recommendedName>
        <fullName>Uncharacterized protein YdiM</fullName>
    </recommendedName>
</protein>
<evidence type="ECO:0000269" key="1">
    <source>
    </source>
</evidence>
<comment type="induction">
    <text evidence="1">Encoded in an operon with groES, groEL, ydiN, ydiO and ydiP. This operon is heat-inducible.</text>
</comment>
<comment type="disruption phenotype">
    <text evidence="1">No BsuMI restriction or methylation-related phenotype.</text>
</comment>
<dbReference type="EMBL" id="AB007637">
    <property type="protein sequence ID" value="BAA22748.1"/>
    <property type="molecule type" value="Genomic_DNA"/>
</dbReference>
<dbReference type="EMBL" id="AL009126">
    <property type="protein sequence ID" value="CAB12423.1"/>
    <property type="molecule type" value="Genomic_DNA"/>
</dbReference>
<dbReference type="PIR" id="F69787">
    <property type="entry name" value="F69787"/>
</dbReference>
<dbReference type="RefSeq" id="NP_388485.1">
    <property type="nucleotide sequence ID" value="NC_000964.3"/>
</dbReference>
<dbReference type="RefSeq" id="WP_003243716.1">
    <property type="nucleotide sequence ID" value="NZ_OZ025638.1"/>
</dbReference>
<dbReference type="FunCoup" id="O34672">
    <property type="interactions" value="2"/>
</dbReference>
<dbReference type="STRING" id="224308.BSU06040"/>
<dbReference type="PaxDb" id="224308-BSU06040"/>
<dbReference type="EnsemblBacteria" id="CAB12423">
    <property type="protein sequence ID" value="CAB12423"/>
    <property type="gene ID" value="BSU_06040"/>
</dbReference>
<dbReference type="GeneID" id="939886"/>
<dbReference type="KEGG" id="bsu:BSU06040"/>
<dbReference type="PATRIC" id="fig|224308.179.peg.652"/>
<dbReference type="eggNOG" id="COG3378">
    <property type="taxonomic scope" value="Bacteria"/>
</dbReference>
<dbReference type="InParanoid" id="O34672"/>
<dbReference type="OrthoDB" id="9763644at2"/>
<dbReference type="BioCyc" id="BSUB:BSU06040-MONOMER"/>
<dbReference type="Proteomes" id="UP000001570">
    <property type="component" value="Chromosome"/>
</dbReference>
<keyword id="KW-1185">Reference proteome</keyword>
<accession>O34672</accession>
<organism>
    <name type="scientific">Bacillus subtilis (strain 168)</name>
    <dbReference type="NCBI Taxonomy" id="224308"/>
    <lineage>
        <taxon>Bacteria</taxon>
        <taxon>Bacillati</taxon>
        <taxon>Bacillota</taxon>
        <taxon>Bacilli</taxon>
        <taxon>Bacillales</taxon>
        <taxon>Bacillaceae</taxon>
        <taxon>Bacillus</taxon>
    </lineage>
</organism>